<accession>Q9S7E6</accession>
<gene>
    <name evidence="5" type="primary">SMD3A</name>
    <name evidence="7" type="ordered locus">At1g76300</name>
    <name evidence="8" type="ORF">F15M4.20</name>
    <name evidence="9" type="ORF">T23E18.23</name>
</gene>
<protein>
    <recommendedName>
        <fullName evidence="6">Small nuclear ribonucleoprotein SmD3a</fullName>
        <shortName evidence="5">SmD3-a</shortName>
    </recommendedName>
    <alternativeName>
        <fullName evidence="6">snRNP core protein D3-a</fullName>
    </alternativeName>
</protein>
<organism>
    <name type="scientific">Arabidopsis thaliana</name>
    <name type="common">Mouse-ear cress</name>
    <dbReference type="NCBI Taxonomy" id="3702"/>
    <lineage>
        <taxon>Eukaryota</taxon>
        <taxon>Viridiplantae</taxon>
        <taxon>Streptophyta</taxon>
        <taxon>Embryophyta</taxon>
        <taxon>Tracheophyta</taxon>
        <taxon>Spermatophyta</taxon>
        <taxon>Magnoliopsida</taxon>
        <taxon>eudicotyledons</taxon>
        <taxon>Gunneridae</taxon>
        <taxon>Pentapetalae</taxon>
        <taxon>rosids</taxon>
        <taxon>malvids</taxon>
        <taxon>Brassicales</taxon>
        <taxon>Brassicaceae</taxon>
        <taxon>Camelineae</taxon>
        <taxon>Arabidopsis</taxon>
    </lineage>
</organism>
<proteinExistence type="evidence at transcript level"/>
<comment type="function">
    <text evidence="1 4">Core component of the spliceosomal U1, U2, U4 and U5 small nuclear ribonucleoproteins (snRNPs), the building blocks of the spliceosome (By similarity). May play a minor role in the splicing of cellular pre-mRNAs (PubMed:21421416).</text>
</comment>
<comment type="subcellular location">
    <subcellularLocation>
        <location evidence="1">Cytoplasm</location>
        <location evidence="1">Cytosol</location>
    </subcellularLocation>
    <subcellularLocation>
        <location evidence="1">Nucleus</location>
    </subcellularLocation>
    <text evidence="1">SMN-mediated assembly into core snRNPs occurs in the cytosol before SMN-mediated transport to the nucleus to be included in spliceosomes.</text>
</comment>
<comment type="tissue specificity">
    <text evidence="4">Expressed in young seedlings, roots, leaves, flowers and immature siliques.</text>
</comment>
<comment type="disruption phenotype">
    <text evidence="4">No visible phenotype under normal growth conditions, but the double mutants smd3-a and smd3-b display embryonic lethality.</text>
</comment>
<comment type="similarity">
    <text evidence="6">Belongs to the snRNP core protein family.</text>
</comment>
<keyword id="KW-0963">Cytoplasm</keyword>
<keyword id="KW-0507">mRNA processing</keyword>
<keyword id="KW-0508">mRNA splicing</keyword>
<keyword id="KW-0539">Nucleus</keyword>
<keyword id="KW-1185">Reference proteome</keyword>
<keyword id="KW-0687">Ribonucleoprotein</keyword>
<keyword id="KW-0694">RNA-binding</keyword>
<keyword id="KW-0747">Spliceosome</keyword>
<evidence type="ECO:0000250" key="1">
    <source>
        <dbReference type="UniProtKB" id="P62318"/>
    </source>
</evidence>
<evidence type="ECO:0000255" key="2">
    <source>
        <dbReference type="PROSITE-ProRule" id="PRU01346"/>
    </source>
</evidence>
<evidence type="ECO:0000256" key="3">
    <source>
        <dbReference type="SAM" id="MobiDB-lite"/>
    </source>
</evidence>
<evidence type="ECO:0000269" key="4">
    <source>
    </source>
</evidence>
<evidence type="ECO:0000303" key="5">
    <source>
    </source>
</evidence>
<evidence type="ECO:0000305" key="6"/>
<evidence type="ECO:0000312" key="7">
    <source>
        <dbReference type="Araport" id="AT1G76300"/>
    </source>
</evidence>
<evidence type="ECO:0000312" key="8">
    <source>
        <dbReference type="EMBL" id="AAF16670.1"/>
    </source>
</evidence>
<evidence type="ECO:0000312" key="9">
    <source>
        <dbReference type="EMBL" id="AAF17631.1"/>
    </source>
</evidence>
<feature type="chain" id="PRO_0000433109" description="Small nuclear ribonucleoprotein SmD3a">
    <location>
        <begin position="1"/>
        <end position="128"/>
    </location>
</feature>
<feature type="domain" description="Sm" evidence="2">
    <location>
        <begin position="7"/>
        <end position="79"/>
    </location>
</feature>
<feature type="region of interest" description="Disordered" evidence="3">
    <location>
        <begin position="90"/>
        <end position="128"/>
    </location>
</feature>
<feature type="compositionally biased region" description="Gly residues" evidence="3">
    <location>
        <begin position="112"/>
        <end position="121"/>
    </location>
</feature>
<name>SMD3A_ARATH</name>
<sequence>MSRSLGIPVKLLHESSGHIVSVEMKSGELYRGSMIECEDNWNCQLENITYTAKDGKVSQLEHVFIRGSLVRFLVIPDMLKNAPMFKDVRGKGKSASLGVGRGRGAAMRAKGTGRGTGGGRGAVPPVRR</sequence>
<dbReference type="EMBL" id="AC009978">
    <property type="protein sequence ID" value="AAF17631.1"/>
    <property type="molecule type" value="Genomic_DNA"/>
</dbReference>
<dbReference type="EMBL" id="AC012394">
    <property type="protein sequence ID" value="AAF16670.1"/>
    <property type="molecule type" value="Genomic_DNA"/>
</dbReference>
<dbReference type="EMBL" id="CP002684">
    <property type="protein sequence ID" value="AEE35822.1"/>
    <property type="molecule type" value="Genomic_DNA"/>
</dbReference>
<dbReference type="EMBL" id="AF380651">
    <property type="protein sequence ID" value="AAK55732.1"/>
    <property type="molecule type" value="mRNA"/>
</dbReference>
<dbReference type="EMBL" id="AY054149">
    <property type="protein sequence ID" value="AAL06810.1"/>
    <property type="molecule type" value="mRNA"/>
</dbReference>
<dbReference type="EMBL" id="AY087251">
    <property type="protein sequence ID" value="AAM64807.1"/>
    <property type="molecule type" value="mRNA"/>
</dbReference>
<dbReference type="PIR" id="E96790">
    <property type="entry name" value="E96790"/>
</dbReference>
<dbReference type="RefSeq" id="NP_177757.1">
    <property type="nucleotide sequence ID" value="NM_106280.4"/>
</dbReference>
<dbReference type="SMR" id="Q9S7E6"/>
<dbReference type="FunCoup" id="Q9S7E6">
    <property type="interactions" value="4014"/>
</dbReference>
<dbReference type="IntAct" id="Q9S7E6">
    <property type="interactions" value="1"/>
</dbReference>
<dbReference type="STRING" id="3702.Q9S7E6"/>
<dbReference type="PaxDb" id="3702-AT1G76300.1"/>
<dbReference type="ProteomicsDB" id="228444"/>
<dbReference type="EnsemblPlants" id="AT1G76300.1">
    <property type="protein sequence ID" value="AT1G76300.1"/>
    <property type="gene ID" value="AT1G76300"/>
</dbReference>
<dbReference type="GeneID" id="843963"/>
<dbReference type="Gramene" id="AT1G76300.1">
    <property type="protein sequence ID" value="AT1G76300.1"/>
    <property type="gene ID" value="AT1G76300"/>
</dbReference>
<dbReference type="KEGG" id="ath:AT1G76300"/>
<dbReference type="Araport" id="AT1G76300"/>
<dbReference type="TAIR" id="AT1G76300">
    <property type="gene designation" value="SMD3"/>
</dbReference>
<dbReference type="eggNOG" id="KOG3172">
    <property type="taxonomic scope" value="Eukaryota"/>
</dbReference>
<dbReference type="HOGENOM" id="CLU_099537_1_0_1"/>
<dbReference type="InParanoid" id="Q9S7E6"/>
<dbReference type="OMA" id="HESEGHV"/>
<dbReference type="OrthoDB" id="6425924at2759"/>
<dbReference type="PhylomeDB" id="Q9S7E6"/>
<dbReference type="CD-CODE" id="4299E36E">
    <property type="entry name" value="Nucleolus"/>
</dbReference>
<dbReference type="PRO" id="PR:Q9S7E6"/>
<dbReference type="Proteomes" id="UP000006548">
    <property type="component" value="Chromosome 1"/>
</dbReference>
<dbReference type="ExpressionAtlas" id="Q9S7E6">
    <property type="expression patterns" value="baseline and differential"/>
</dbReference>
<dbReference type="GO" id="GO:0005829">
    <property type="term" value="C:cytosol"/>
    <property type="evidence" value="ECO:0007669"/>
    <property type="project" value="UniProtKB-SubCell"/>
</dbReference>
<dbReference type="GO" id="GO:0016604">
    <property type="term" value="C:nuclear body"/>
    <property type="evidence" value="ECO:0000314"/>
    <property type="project" value="TAIR"/>
</dbReference>
<dbReference type="GO" id="GO:0005730">
    <property type="term" value="C:nucleolus"/>
    <property type="evidence" value="ECO:0007005"/>
    <property type="project" value="TAIR"/>
</dbReference>
<dbReference type="GO" id="GO:0005634">
    <property type="term" value="C:nucleus"/>
    <property type="evidence" value="ECO:0007005"/>
    <property type="project" value="TAIR"/>
</dbReference>
<dbReference type="GO" id="GO:0005681">
    <property type="term" value="C:spliceosomal complex"/>
    <property type="evidence" value="ECO:0007669"/>
    <property type="project" value="UniProtKB-KW"/>
</dbReference>
<dbReference type="GO" id="GO:0003723">
    <property type="term" value="F:RNA binding"/>
    <property type="evidence" value="ECO:0007669"/>
    <property type="project" value="UniProtKB-KW"/>
</dbReference>
<dbReference type="GO" id="GO:0000398">
    <property type="term" value="P:mRNA splicing, via spliceosome"/>
    <property type="evidence" value="ECO:0000315"/>
    <property type="project" value="UniProtKB"/>
</dbReference>
<dbReference type="GO" id="GO:0000387">
    <property type="term" value="P:spliceosomal snRNP assembly"/>
    <property type="evidence" value="ECO:0007669"/>
    <property type="project" value="InterPro"/>
</dbReference>
<dbReference type="CDD" id="cd01721">
    <property type="entry name" value="Sm_D3"/>
    <property type="match status" value="1"/>
</dbReference>
<dbReference type="FunFam" id="2.30.30.100:FF:000002">
    <property type="entry name" value="Small nuclear ribonucleoprotein Sm D3"/>
    <property type="match status" value="1"/>
</dbReference>
<dbReference type="Gene3D" id="2.30.30.100">
    <property type="match status" value="1"/>
</dbReference>
<dbReference type="InterPro" id="IPR027141">
    <property type="entry name" value="LSm4/Sm_D1/D3"/>
</dbReference>
<dbReference type="InterPro" id="IPR010920">
    <property type="entry name" value="LSM_dom_sf"/>
</dbReference>
<dbReference type="InterPro" id="IPR047575">
    <property type="entry name" value="Sm"/>
</dbReference>
<dbReference type="InterPro" id="IPR001163">
    <property type="entry name" value="Sm_dom_euk/arc"/>
</dbReference>
<dbReference type="InterPro" id="IPR034099">
    <property type="entry name" value="SmD3"/>
</dbReference>
<dbReference type="PANTHER" id="PTHR23338">
    <property type="entry name" value="SMALL NUCLEAR RIBONUCLEOPROTEIN SM"/>
    <property type="match status" value="1"/>
</dbReference>
<dbReference type="Pfam" id="PF01423">
    <property type="entry name" value="LSM"/>
    <property type="match status" value="1"/>
</dbReference>
<dbReference type="SMART" id="SM00651">
    <property type="entry name" value="Sm"/>
    <property type="match status" value="1"/>
</dbReference>
<dbReference type="SUPFAM" id="SSF50182">
    <property type="entry name" value="Sm-like ribonucleoproteins"/>
    <property type="match status" value="1"/>
</dbReference>
<dbReference type="PROSITE" id="PS52002">
    <property type="entry name" value="SM"/>
    <property type="match status" value="1"/>
</dbReference>
<reference key="1">
    <citation type="journal article" date="2000" name="Nature">
        <title>Sequence and analysis of chromosome 1 of the plant Arabidopsis thaliana.</title>
        <authorList>
            <person name="Theologis A."/>
            <person name="Ecker J.R."/>
            <person name="Palm C.J."/>
            <person name="Federspiel N.A."/>
            <person name="Kaul S."/>
            <person name="White O."/>
            <person name="Alonso J."/>
            <person name="Altafi H."/>
            <person name="Araujo R."/>
            <person name="Bowman C.L."/>
            <person name="Brooks S.Y."/>
            <person name="Buehler E."/>
            <person name="Chan A."/>
            <person name="Chao Q."/>
            <person name="Chen H."/>
            <person name="Cheuk R.F."/>
            <person name="Chin C.W."/>
            <person name="Chung M.K."/>
            <person name="Conn L."/>
            <person name="Conway A.B."/>
            <person name="Conway A.R."/>
            <person name="Creasy T.H."/>
            <person name="Dewar K."/>
            <person name="Dunn P."/>
            <person name="Etgu P."/>
            <person name="Feldblyum T.V."/>
            <person name="Feng J.-D."/>
            <person name="Fong B."/>
            <person name="Fujii C.Y."/>
            <person name="Gill J.E."/>
            <person name="Goldsmith A.D."/>
            <person name="Haas B."/>
            <person name="Hansen N.F."/>
            <person name="Hughes B."/>
            <person name="Huizar L."/>
            <person name="Hunter J.L."/>
            <person name="Jenkins J."/>
            <person name="Johnson-Hopson C."/>
            <person name="Khan S."/>
            <person name="Khaykin E."/>
            <person name="Kim C.J."/>
            <person name="Koo H.L."/>
            <person name="Kremenetskaia I."/>
            <person name="Kurtz D.B."/>
            <person name="Kwan A."/>
            <person name="Lam B."/>
            <person name="Langin-Hooper S."/>
            <person name="Lee A."/>
            <person name="Lee J.M."/>
            <person name="Lenz C.A."/>
            <person name="Li J.H."/>
            <person name="Li Y.-P."/>
            <person name="Lin X."/>
            <person name="Liu S.X."/>
            <person name="Liu Z.A."/>
            <person name="Luros J.S."/>
            <person name="Maiti R."/>
            <person name="Marziali A."/>
            <person name="Militscher J."/>
            <person name="Miranda M."/>
            <person name="Nguyen M."/>
            <person name="Nierman W.C."/>
            <person name="Osborne B.I."/>
            <person name="Pai G."/>
            <person name="Peterson J."/>
            <person name="Pham P.K."/>
            <person name="Rizzo M."/>
            <person name="Rooney T."/>
            <person name="Rowley D."/>
            <person name="Sakano H."/>
            <person name="Salzberg S.L."/>
            <person name="Schwartz J.R."/>
            <person name="Shinn P."/>
            <person name="Southwick A.M."/>
            <person name="Sun H."/>
            <person name="Tallon L.J."/>
            <person name="Tambunga G."/>
            <person name="Toriumi M.J."/>
            <person name="Town C.D."/>
            <person name="Utterback T."/>
            <person name="Van Aken S."/>
            <person name="Vaysberg M."/>
            <person name="Vysotskaia V.S."/>
            <person name="Walker M."/>
            <person name="Wu D."/>
            <person name="Yu G."/>
            <person name="Fraser C.M."/>
            <person name="Venter J.C."/>
            <person name="Davis R.W."/>
        </authorList>
    </citation>
    <scope>NUCLEOTIDE SEQUENCE [LARGE SCALE GENOMIC DNA]</scope>
    <source>
        <strain>cv. Columbia</strain>
    </source>
</reference>
<reference key="2">
    <citation type="journal article" date="2017" name="Plant J.">
        <title>Araport11: a complete reannotation of the Arabidopsis thaliana reference genome.</title>
        <authorList>
            <person name="Cheng C.Y."/>
            <person name="Krishnakumar V."/>
            <person name="Chan A.P."/>
            <person name="Thibaud-Nissen F."/>
            <person name="Schobel S."/>
            <person name="Town C.D."/>
        </authorList>
    </citation>
    <scope>GENOME REANNOTATION</scope>
    <source>
        <strain>cv. Columbia</strain>
    </source>
</reference>
<reference key="3">
    <citation type="journal article" date="2003" name="Science">
        <title>Empirical analysis of transcriptional activity in the Arabidopsis genome.</title>
        <authorList>
            <person name="Yamada K."/>
            <person name="Lim J."/>
            <person name="Dale J.M."/>
            <person name="Chen H."/>
            <person name="Shinn P."/>
            <person name="Palm C.J."/>
            <person name="Southwick A.M."/>
            <person name="Wu H.C."/>
            <person name="Kim C.J."/>
            <person name="Nguyen M."/>
            <person name="Pham P.K."/>
            <person name="Cheuk R.F."/>
            <person name="Karlin-Newmann G."/>
            <person name="Liu S.X."/>
            <person name="Lam B."/>
            <person name="Sakano H."/>
            <person name="Wu T."/>
            <person name="Yu G."/>
            <person name="Miranda M."/>
            <person name="Quach H.L."/>
            <person name="Tripp M."/>
            <person name="Chang C.H."/>
            <person name="Lee J.M."/>
            <person name="Toriumi M.J."/>
            <person name="Chan M.M."/>
            <person name="Tang C.C."/>
            <person name="Onodera C.S."/>
            <person name="Deng J.M."/>
            <person name="Akiyama K."/>
            <person name="Ansari Y."/>
            <person name="Arakawa T."/>
            <person name="Banh J."/>
            <person name="Banno F."/>
            <person name="Bowser L."/>
            <person name="Brooks S.Y."/>
            <person name="Carninci P."/>
            <person name="Chao Q."/>
            <person name="Choy N."/>
            <person name="Enju A."/>
            <person name="Goldsmith A.D."/>
            <person name="Gurjal M."/>
            <person name="Hansen N.F."/>
            <person name="Hayashizaki Y."/>
            <person name="Johnson-Hopson C."/>
            <person name="Hsuan V.W."/>
            <person name="Iida K."/>
            <person name="Karnes M."/>
            <person name="Khan S."/>
            <person name="Koesema E."/>
            <person name="Ishida J."/>
            <person name="Jiang P.X."/>
            <person name="Jones T."/>
            <person name="Kawai J."/>
            <person name="Kamiya A."/>
            <person name="Meyers C."/>
            <person name="Nakajima M."/>
            <person name="Narusaka M."/>
            <person name="Seki M."/>
            <person name="Sakurai T."/>
            <person name="Satou M."/>
            <person name="Tamse R."/>
            <person name="Vaysberg M."/>
            <person name="Wallender E.K."/>
            <person name="Wong C."/>
            <person name="Yamamura Y."/>
            <person name="Yuan S."/>
            <person name="Shinozaki K."/>
            <person name="Davis R.W."/>
            <person name="Theologis A."/>
            <person name="Ecker J.R."/>
        </authorList>
    </citation>
    <scope>NUCLEOTIDE SEQUENCE [LARGE SCALE MRNA]</scope>
    <source>
        <strain>cv. Columbia</strain>
    </source>
</reference>
<reference key="4">
    <citation type="submission" date="2002-03" db="EMBL/GenBank/DDBJ databases">
        <title>Full-length cDNA from Arabidopsis thaliana.</title>
        <authorList>
            <person name="Brover V.V."/>
            <person name="Troukhan M.E."/>
            <person name="Alexandrov N.A."/>
            <person name="Lu Y.-P."/>
            <person name="Flavell R.B."/>
            <person name="Feldmann K.A."/>
        </authorList>
    </citation>
    <scope>NUCLEOTIDE SEQUENCE [LARGE SCALE MRNA]</scope>
</reference>
<reference key="5">
    <citation type="journal article" date="2011" name="Plant Sci.">
        <title>Knock-out mutations of Arabidopsis SmD3-b induce pleotropic phenotypes through altered transcript splicing.</title>
        <authorList>
            <person name="Swaraz A.M."/>
            <person name="Park Y.D."/>
            <person name="Hur Y."/>
        </authorList>
    </citation>
    <scope>FUNCTION</scope>
    <scope>TISSUE SPECIFICITY</scope>
    <scope>DISRUPTION PHENOTYPE</scope>
</reference>